<accession>P83428</accession>
<keyword id="KW-0044">Antibiotic</keyword>
<keyword id="KW-0929">Antimicrobial</keyword>
<keyword id="KW-0903">Direct protein sequencing</keyword>
<keyword id="KW-1015">Disulfide bond</keyword>
<keyword id="KW-0391">Immunity</keyword>
<keyword id="KW-0399">Innate immunity</keyword>
<keyword id="KW-0964">Secreted</keyword>
<feature type="chain" id="PRO_0000084457" description="Locustin">
    <location>
        <begin position="1"/>
        <end position="55"/>
    </location>
</feature>
<feature type="disulfide bond" evidence="1">
    <location>
        <begin position="5"/>
        <end position="40"/>
    </location>
</feature>
<feature type="disulfide bond" evidence="1">
    <location>
        <begin position="7"/>
        <end position="36"/>
    </location>
</feature>
<feature type="disulfide bond" evidence="1">
    <location>
        <begin position="10"/>
        <end position="32"/>
    </location>
</feature>
<feature type="disulfide bond" evidence="1">
    <location>
        <begin position="17"/>
        <end position="54"/>
    </location>
</feature>
<protein>
    <recommendedName>
        <fullName>Locustin</fullName>
    </recommendedName>
</protein>
<name>LOCU_LOCMI</name>
<reference evidence="2" key="1">
    <citation type="submission" date="2002-07" db="UniProtKB">
        <authorList>
            <person name="Bulet P."/>
            <person name="Charlet M."/>
            <person name="Sabatier-Ehret L."/>
        </authorList>
    </citation>
    <scope>PROTEIN SEQUENCE</scope>
    <scope>FUNCTION</scope>
    <scope>SUBUNIT</scope>
    <scope>SUBCELLULAR LOCATION</scope>
    <scope>TISSUE SPECIFICITY</scope>
    <scope>MASS SPECTROMETRY</scope>
    <scope>DISULFIDE BONDS</scope>
    <source>
        <tissue>Hemocyte</tissue>
    </source>
</reference>
<proteinExistence type="evidence at protein level"/>
<comment type="function">
    <text evidence="1 2">Has antibacterial activity against Gram-positive bacterium M.luteus.</text>
</comment>
<comment type="subunit">
    <text evidence="1 2">Monomer.</text>
</comment>
<comment type="subcellular location">
    <subcellularLocation>
        <location evidence="1 2">Secreted</location>
    </subcellularLocation>
</comment>
<comment type="tissue specificity">
    <text evidence="1 2">Stored in hemocyte granules and secreted into the hemolymph.</text>
</comment>
<comment type="mass spectrometry" mass="6052.57" method="MALDI" evidence="1"/>
<evidence type="ECO:0000269" key="1">
    <source ref="1"/>
</evidence>
<evidence type="ECO:0000305" key="2"/>
<dbReference type="GO" id="GO:0005576">
    <property type="term" value="C:extracellular region"/>
    <property type="evidence" value="ECO:0007669"/>
    <property type="project" value="UniProtKB-SubCell"/>
</dbReference>
<dbReference type="GO" id="GO:0042742">
    <property type="term" value="P:defense response to bacterium"/>
    <property type="evidence" value="ECO:0007669"/>
    <property type="project" value="UniProtKB-KW"/>
</dbReference>
<dbReference type="GO" id="GO:0045087">
    <property type="term" value="P:innate immune response"/>
    <property type="evidence" value="ECO:0007669"/>
    <property type="project" value="UniProtKB-KW"/>
</dbReference>
<organism evidence="2">
    <name type="scientific">Locusta migratoria</name>
    <name type="common">Migratory locust</name>
    <dbReference type="NCBI Taxonomy" id="7004"/>
    <lineage>
        <taxon>Eukaryota</taxon>
        <taxon>Metazoa</taxon>
        <taxon>Ecdysozoa</taxon>
        <taxon>Arthropoda</taxon>
        <taxon>Hexapoda</taxon>
        <taxon>Insecta</taxon>
        <taxon>Pterygota</taxon>
        <taxon>Neoptera</taxon>
        <taxon>Polyneoptera</taxon>
        <taxon>Orthoptera</taxon>
        <taxon>Caelifera</taxon>
        <taxon>Acrididea</taxon>
        <taxon>Acridomorpha</taxon>
        <taxon>Acridoidea</taxon>
        <taxon>Acrididae</taxon>
        <taxon>Oedipodinae</taxon>
        <taxon>Locusta</taxon>
    </lineage>
</organism>
<sequence length="55" mass="6061">ATTGCSCPQCIIFDPICASSYKNGRRGFSSGCHMRCYNRCHGTDYFQISKGSKCI</sequence>